<keyword id="KW-0178">Competence</keyword>
<keyword id="KW-0963">Cytoplasm</keyword>
<keyword id="KW-1185">Reference proteome</keyword>
<organism>
    <name type="scientific">Bacillus subtilis (strain 168)</name>
    <dbReference type="NCBI Taxonomy" id="224308"/>
    <lineage>
        <taxon>Bacteria</taxon>
        <taxon>Bacillati</taxon>
        <taxon>Bacillota</taxon>
        <taxon>Bacilli</taxon>
        <taxon>Bacillales</taxon>
        <taxon>Bacillaceae</taxon>
        <taxon>Bacillus</taxon>
    </lineage>
</organism>
<reference key="1">
    <citation type="journal article" date="1997" name="Nature">
        <title>The complete genome sequence of the Gram-positive bacterium Bacillus subtilis.</title>
        <authorList>
            <person name="Kunst F."/>
            <person name="Ogasawara N."/>
            <person name="Moszer I."/>
            <person name="Albertini A.M."/>
            <person name="Alloni G."/>
            <person name="Azevedo V."/>
            <person name="Bertero M.G."/>
            <person name="Bessieres P."/>
            <person name="Bolotin A."/>
            <person name="Borchert S."/>
            <person name="Borriss R."/>
            <person name="Boursier L."/>
            <person name="Brans A."/>
            <person name="Braun M."/>
            <person name="Brignell S.C."/>
            <person name="Bron S."/>
            <person name="Brouillet S."/>
            <person name="Bruschi C.V."/>
            <person name="Caldwell B."/>
            <person name="Capuano V."/>
            <person name="Carter N.M."/>
            <person name="Choi S.-K."/>
            <person name="Codani J.-J."/>
            <person name="Connerton I.F."/>
            <person name="Cummings N.J."/>
            <person name="Daniel R.A."/>
            <person name="Denizot F."/>
            <person name="Devine K.M."/>
            <person name="Duesterhoeft A."/>
            <person name="Ehrlich S.D."/>
            <person name="Emmerson P.T."/>
            <person name="Entian K.-D."/>
            <person name="Errington J."/>
            <person name="Fabret C."/>
            <person name="Ferrari E."/>
            <person name="Foulger D."/>
            <person name="Fritz C."/>
            <person name="Fujita M."/>
            <person name="Fujita Y."/>
            <person name="Fuma S."/>
            <person name="Galizzi A."/>
            <person name="Galleron N."/>
            <person name="Ghim S.-Y."/>
            <person name="Glaser P."/>
            <person name="Goffeau A."/>
            <person name="Golightly E.J."/>
            <person name="Grandi G."/>
            <person name="Guiseppi G."/>
            <person name="Guy B.J."/>
            <person name="Haga K."/>
            <person name="Haiech J."/>
            <person name="Harwood C.R."/>
            <person name="Henaut A."/>
            <person name="Hilbert H."/>
            <person name="Holsappel S."/>
            <person name="Hosono S."/>
            <person name="Hullo M.-F."/>
            <person name="Itaya M."/>
            <person name="Jones L.-M."/>
            <person name="Joris B."/>
            <person name="Karamata D."/>
            <person name="Kasahara Y."/>
            <person name="Klaerr-Blanchard M."/>
            <person name="Klein C."/>
            <person name="Kobayashi Y."/>
            <person name="Koetter P."/>
            <person name="Koningstein G."/>
            <person name="Krogh S."/>
            <person name="Kumano M."/>
            <person name="Kurita K."/>
            <person name="Lapidus A."/>
            <person name="Lardinois S."/>
            <person name="Lauber J."/>
            <person name="Lazarevic V."/>
            <person name="Lee S.-M."/>
            <person name="Levine A."/>
            <person name="Liu H."/>
            <person name="Masuda S."/>
            <person name="Mauel C."/>
            <person name="Medigue C."/>
            <person name="Medina N."/>
            <person name="Mellado R.P."/>
            <person name="Mizuno M."/>
            <person name="Moestl D."/>
            <person name="Nakai S."/>
            <person name="Noback M."/>
            <person name="Noone D."/>
            <person name="O'Reilly M."/>
            <person name="Ogawa K."/>
            <person name="Ogiwara A."/>
            <person name="Oudega B."/>
            <person name="Park S.-H."/>
            <person name="Parro V."/>
            <person name="Pohl T.M."/>
            <person name="Portetelle D."/>
            <person name="Porwollik S."/>
            <person name="Prescott A.M."/>
            <person name="Presecan E."/>
            <person name="Pujic P."/>
            <person name="Purnelle B."/>
            <person name="Rapoport G."/>
            <person name="Rey M."/>
            <person name="Reynolds S."/>
            <person name="Rieger M."/>
            <person name="Rivolta C."/>
            <person name="Rocha E."/>
            <person name="Roche B."/>
            <person name="Rose M."/>
            <person name="Sadaie Y."/>
            <person name="Sato T."/>
            <person name="Scanlan E."/>
            <person name="Schleich S."/>
            <person name="Schroeter R."/>
            <person name="Scoffone F."/>
            <person name="Sekiguchi J."/>
            <person name="Sekowska A."/>
            <person name="Seror S.J."/>
            <person name="Serror P."/>
            <person name="Shin B.-S."/>
            <person name="Soldo B."/>
            <person name="Sorokin A."/>
            <person name="Tacconi E."/>
            <person name="Takagi T."/>
            <person name="Takahashi H."/>
            <person name="Takemaru K."/>
            <person name="Takeuchi M."/>
            <person name="Tamakoshi A."/>
            <person name="Tanaka T."/>
            <person name="Terpstra P."/>
            <person name="Tognoni A."/>
            <person name="Tosato V."/>
            <person name="Uchiyama S."/>
            <person name="Vandenbol M."/>
            <person name="Vannier F."/>
            <person name="Vassarotti A."/>
            <person name="Viari A."/>
            <person name="Wambutt R."/>
            <person name="Wedler E."/>
            <person name="Wedler H."/>
            <person name="Weitzenegger T."/>
            <person name="Winters P."/>
            <person name="Wipat A."/>
            <person name="Yamamoto H."/>
            <person name="Yamane K."/>
            <person name="Yasumoto K."/>
            <person name="Yata K."/>
            <person name="Yoshida K."/>
            <person name="Yoshikawa H.-F."/>
            <person name="Zumstein E."/>
            <person name="Yoshikawa H."/>
            <person name="Danchin A."/>
        </authorList>
    </citation>
    <scope>NUCLEOTIDE SEQUENCE [LARGE SCALE GENOMIC DNA]</scope>
    <source>
        <strain>168</strain>
    </source>
</reference>
<reference key="2">
    <citation type="journal article" date="2007" name="Mol. Microbiol.">
        <title>Multiple interactions among the competence proteins of Bacillus subtilis.</title>
        <authorList>
            <person name="Kramer N."/>
            <person name="Hahn J."/>
            <person name="Dubnau D."/>
        </authorList>
    </citation>
    <scope>FUNCTION</scope>
    <scope>SUBCELLULAR LOCATION</scope>
    <scope>DEVELOPMENTAL STAGE</scope>
    <source>
        <strain>168</strain>
    </source>
</reference>
<name>COIA_BACSU</name>
<dbReference type="EMBL" id="AL009126">
    <property type="protein sequence ID" value="CAB13010.1"/>
    <property type="molecule type" value="Genomic_DNA"/>
</dbReference>
<dbReference type="PIR" id="F69843">
    <property type="entry name" value="F69843"/>
</dbReference>
<dbReference type="RefSeq" id="NP_389035.1">
    <property type="nucleotide sequence ID" value="NC_000964.3"/>
</dbReference>
<dbReference type="RefSeq" id="WP_010886479.1">
    <property type="nucleotide sequence ID" value="NZ_OZ025638.1"/>
</dbReference>
<dbReference type="FunCoup" id="O31604">
    <property type="interactions" value="47"/>
</dbReference>
<dbReference type="STRING" id="224308.BSU11530"/>
<dbReference type="PaxDb" id="224308-BSU11530"/>
<dbReference type="DNASU" id="939370"/>
<dbReference type="EnsemblBacteria" id="CAB13010">
    <property type="protein sequence ID" value="CAB13010"/>
    <property type="gene ID" value="BSU_11530"/>
</dbReference>
<dbReference type="GeneID" id="939370"/>
<dbReference type="KEGG" id="bsu:BSU11530"/>
<dbReference type="PATRIC" id="fig|224308.43.peg.1204"/>
<dbReference type="eggNOG" id="COG4469">
    <property type="taxonomic scope" value="Bacteria"/>
</dbReference>
<dbReference type="InParanoid" id="O31604"/>
<dbReference type="OrthoDB" id="3784230at2"/>
<dbReference type="PhylomeDB" id="O31604"/>
<dbReference type="BioCyc" id="BSUB:BSU11530-MONOMER"/>
<dbReference type="Proteomes" id="UP000001570">
    <property type="component" value="Chromosome"/>
</dbReference>
<dbReference type="GO" id="GO:0005737">
    <property type="term" value="C:cytoplasm"/>
    <property type="evidence" value="ECO:0007669"/>
    <property type="project" value="UniProtKB-SubCell"/>
</dbReference>
<dbReference type="GO" id="GO:0030420">
    <property type="term" value="P:establishment of competence for transformation"/>
    <property type="evidence" value="ECO:0007669"/>
    <property type="project" value="UniProtKB-KW"/>
</dbReference>
<dbReference type="InterPro" id="IPR010330">
    <property type="entry name" value="CoiA_nuc"/>
</dbReference>
<dbReference type="InterPro" id="IPR021176">
    <property type="entry name" value="Competence-induced_CoiA"/>
</dbReference>
<dbReference type="Pfam" id="PF25166">
    <property type="entry name" value="CoiA_C"/>
    <property type="match status" value="1"/>
</dbReference>
<dbReference type="Pfam" id="PF25164">
    <property type="entry name" value="CoiA_N"/>
    <property type="match status" value="1"/>
</dbReference>
<dbReference type="Pfam" id="PF06054">
    <property type="entry name" value="CoiA_nuc"/>
    <property type="match status" value="1"/>
</dbReference>
<dbReference type="PIRSF" id="PIRSF007487">
    <property type="entry name" value="Competence-induced_CoiA_bac"/>
    <property type="match status" value="1"/>
</dbReference>
<evidence type="ECO:0000269" key="1">
    <source>
    </source>
</evidence>
<evidence type="ECO:0000305" key="2">
    <source>
    </source>
</evidence>
<gene>
    <name type="primary">coiA</name>
    <name type="synonym">yjbF</name>
    <name type="ordered locus">BSU11530</name>
</gene>
<comment type="function">
    <text evidence="1">Required for optimal transformation.</text>
</comment>
<comment type="subcellular location">
    <subcellularLocation>
        <location evidence="2">Cytoplasm</location>
    </subcellularLocation>
    <text evidence="1">Localizes at the cell poles of most competence-expressing cells (PubMed:17630974). During competence a number of proteins (at least CoiA, ComFA, ComGA, DprA, RecA and SsbB) are thought to colocalize at the cell pole (PubMed:17630974).</text>
</comment>
<comment type="developmental stage">
    <text evidence="1">Preferentially expressed in cells competent for DNA transformation; that is 5-15% of the population (PubMed:17630974).</text>
</comment>
<proteinExistence type="evidence at transcript level"/>
<sequence length="373" mass="43690">MFHLLGAQQNQKLKRRRFFCPVCGGELAVKLGLQKAPHFAHKQNKSCAIDIEPESAYHLEGKRQLYVWLKTQRASPILEPYIRTINQRPDVMARIKEHMLAVEYQCATIAPDVFQKRTEGFKQEGIIPQWIMGYSRLKRTASSFYQLSTFHWQFINASPYRELICYCPERRSFLRLSHIIPFYTNHSYSSVQTIPIHRAGAGDLFFTEPKPSIQYSGWTKAIHRFRHKPHRFNSKETNRLRLLFYEKRQTPFSFLPTEVFVPVRKGAVFKSPVFVWQGFLYLFMTDLGGKRAPIRFSAVLQQCKLHIHNKNIALRSECSEECLSEAVKQYIDFLCKKGFLRETQKEVYVLNQPAGGIHSMQDLIERDRSCFIE</sequence>
<accession>O31604</accession>
<feature type="chain" id="PRO_0000387955" description="Competence protein CoiA">
    <location>
        <begin position="1"/>
        <end position="373"/>
    </location>
</feature>
<protein>
    <recommendedName>
        <fullName>Competence protein CoiA</fullName>
    </recommendedName>
</protein>